<evidence type="ECO:0000250" key="1">
    <source>
        <dbReference type="UniProtKB" id="P80043"/>
    </source>
</evidence>
<evidence type="ECO:0000255" key="2">
    <source>
        <dbReference type="PROSITE-ProRule" id="PRU00238"/>
    </source>
</evidence>
<evidence type="ECO:0000269" key="3">
    <source ref="1"/>
</evidence>
<evidence type="ECO:0000303" key="4">
    <source ref="1"/>
</evidence>
<keyword id="KW-0903">Direct protein sequencing</keyword>
<keyword id="KW-0349">Heme</keyword>
<keyword id="KW-0408">Iron</keyword>
<keyword id="KW-0479">Metal-binding</keyword>
<keyword id="KW-0561">Oxygen transport</keyword>
<keyword id="KW-0813">Transport</keyword>
<name>HBA_DISEL</name>
<protein>
    <recommendedName>
        <fullName evidence="4">Hemoglobin subunit alpha</fullName>
    </recommendedName>
    <alternativeName>
        <fullName evidence="1">Alpha-globin</fullName>
    </alternativeName>
    <alternativeName>
        <fullName evidence="1">Hemoglobin alpha chain</fullName>
    </alternativeName>
</protein>
<dbReference type="SMR" id="C0HJT8"/>
<dbReference type="GO" id="GO:0072562">
    <property type="term" value="C:blood microparticle"/>
    <property type="evidence" value="ECO:0007669"/>
    <property type="project" value="TreeGrafter"/>
</dbReference>
<dbReference type="GO" id="GO:0031838">
    <property type="term" value="C:haptoglobin-hemoglobin complex"/>
    <property type="evidence" value="ECO:0007669"/>
    <property type="project" value="TreeGrafter"/>
</dbReference>
<dbReference type="GO" id="GO:0005833">
    <property type="term" value="C:hemoglobin complex"/>
    <property type="evidence" value="ECO:0007669"/>
    <property type="project" value="InterPro"/>
</dbReference>
<dbReference type="GO" id="GO:0031720">
    <property type="term" value="F:haptoglobin binding"/>
    <property type="evidence" value="ECO:0007669"/>
    <property type="project" value="TreeGrafter"/>
</dbReference>
<dbReference type="GO" id="GO:0020037">
    <property type="term" value="F:heme binding"/>
    <property type="evidence" value="ECO:0007669"/>
    <property type="project" value="InterPro"/>
</dbReference>
<dbReference type="GO" id="GO:0046872">
    <property type="term" value="F:metal ion binding"/>
    <property type="evidence" value="ECO:0007669"/>
    <property type="project" value="UniProtKB-KW"/>
</dbReference>
<dbReference type="GO" id="GO:0043177">
    <property type="term" value="F:organic acid binding"/>
    <property type="evidence" value="ECO:0007669"/>
    <property type="project" value="TreeGrafter"/>
</dbReference>
<dbReference type="GO" id="GO:0019825">
    <property type="term" value="F:oxygen binding"/>
    <property type="evidence" value="ECO:0007669"/>
    <property type="project" value="InterPro"/>
</dbReference>
<dbReference type="GO" id="GO:0005344">
    <property type="term" value="F:oxygen carrier activity"/>
    <property type="evidence" value="ECO:0007669"/>
    <property type="project" value="UniProtKB-KW"/>
</dbReference>
<dbReference type="GO" id="GO:0004601">
    <property type="term" value="F:peroxidase activity"/>
    <property type="evidence" value="ECO:0007669"/>
    <property type="project" value="TreeGrafter"/>
</dbReference>
<dbReference type="GO" id="GO:0042744">
    <property type="term" value="P:hydrogen peroxide catabolic process"/>
    <property type="evidence" value="ECO:0007669"/>
    <property type="project" value="TreeGrafter"/>
</dbReference>
<dbReference type="CDD" id="cd08927">
    <property type="entry name" value="Hb-alpha-like"/>
    <property type="match status" value="1"/>
</dbReference>
<dbReference type="FunFam" id="1.10.490.10:FF:000002">
    <property type="entry name" value="Hemoglobin subunit alpha"/>
    <property type="match status" value="1"/>
</dbReference>
<dbReference type="Gene3D" id="1.10.490.10">
    <property type="entry name" value="Globins"/>
    <property type="match status" value="1"/>
</dbReference>
<dbReference type="InterPro" id="IPR000971">
    <property type="entry name" value="Globin"/>
</dbReference>
<dbReference type="InterPro" id="IPR009050">
    <property type="entry name" value="Globin-like_sf"/>
</dbReference>
<dbReference type="InterPro" id="IPR012292">
    <property type="entry name" value="Globin/Proto"/>
</dbReference>
<dbReference type="InterPro" id="IPR002338">
    <property type="entry name" value="Hemoglobin_a-typ"/>
</dbReference>
<dbReference type="InterPro" id="IPR050056">
    <property type="entry name" value="Hemoglobin_oxygen_transport"/>
</dbReference>
<dbReference type="PANTHER" id="PTHR11442">
    <property type="entry name" value="HEMOGLOBIN FAMILY MEMBER"/>
    <property type="match status" value="1"/>
</dbReference>
<dbReference type="PANTHER" id="PTHR11442:SF41">
    <property type="entry name" value="HEMOGLOBIN SUBUNIT ZETA"/>
    <property type="match status" value="1"/>
</dbReference>
<dbReference type="Pfam" id="PF00042">
    <property type="entry name" value="Globin"/>
    <property type="match status" value="1"/>
</dbReference>
<dbReference type="PRINTS" id="PR00612">
    <property type="entry name" value="ALPHAHAEM"/>
</dbReference>
<dbReference type="SUPFAM" id="SSF46458">
    <property type="entry name" value="Globin-like"/>
    <property type="match status" value="1"/>
</dbReference>
<dbReference type="PROSITE" id="PS01033">
    <property type="entry name" value="GLOBIN"/>
    <property type="match status" value="1"/>
</dbReference>
<reference key="1">
    <citation type="journal article" date="2015" name="Hydrobiologia">
        <title>Functional characterisation of the haemoglobins of the migratory notothenioid fish Dissostichus eleginoides.</title>
        <authorList>
            <person name="Coppola D."/>
            <person name="Giordano D."/>
            <person name="Abbruzzetti S."/>
            <person name="Marchesani F."/>
            <person name="Balestrieri M."/>
            <person name="di Prisco G."/>
            <person name="Viappiani C."/>
            <person name="Bruno S."/>
            <person name="Verde C."/>
        </authorList>
    </citation>
    <scope>PROTEIN SEQUENCE</scope>
    <scope>FUNCTION</scope>
    <scope>SUBUNIT</scope>
    <scope>PTM</scope>
    <scope>TISSUE SPECIFICITY</scope>
    <source>
        <tissue evidence="4">Erythrocyte</tissue>
    </source>
</reference>
<gene>
    <name evidence="1" type="primary">hba</name>
</gene>
<organism evidence="4">
    <name type="scientific">Dissostichus eleginoides</name>
    <name type="common">Patagonian toothfish</name>
    <name type="synonym">Dissostichus amissus</name>
    <dbReference type="NCBI Taxonomy" id="100907"/>
    <lineage>
        <taxon>Eukaryota</taxon>
        <taxon>Metazoa</taxon>
        <taxon>Chordata</taxon>
        <taxon>Craniata</taxon>
        <taxon>Vertebrata</taxon>
        <taxon>Euteleostomi</taxon>
        <taxon>Actinopterygii</taxon>
        <taxon>Neopterygii</taxon>
        <taxon>Teleostei</taxon>
        <taxon>Neoteleostei</taxon>
        <taxon>Acanthomorphata</taxon>
        <taxon>Eupercaria</taxon>
        <taxon>Perciformes</taxon>
        <taxon>Notothenioidei</taxon>
        <taxon>Nototheniidae</taxon>
        <taxon>Dissostichus</taxon>
    </lineage>
</organism>
<sequence length="135" mass="14770">AAVVALWGKIGKSADVIGNDALSRMIVVYPETKTYFSHWPDLAPGSPHIKAHGKKVMGGIALAVTKIDDLKAGLFDLSEQHAYKLRVDPSNFKILNHCILVVISIMFPKEFTPEAHVSLDKFLSGVALALAERYK</sequence>
<comment type="function">
    <text evidence="3">Involved in oxygen transport from gills to the various peripheral tissues.</text>
</comment>
<comment type="subunit">
    <text evidence="3">Hb1 is a heterotetramer of two alpha chains and two beta-1 chains. Hb2 is a heterotetramer of two alpha chains and two beta-2 chains.</text>
</comment>
<comment type="tissue specificity">
    <text evidence="3">Red blood cells.</text>
</comment>
<comment type="PTM">
    <text evidence="3">The N-terminus is blocked.</text>
</comment>
<comment type="miscellaneous">
    <text evidence="3">This fish has 2 hemoglobins: Hb1 (major) and the minor Hb2 which constitutes about 5% of the total.</text>
</comment>
<comment type="similarity">
    <text evidence="2">Belongs to the globin family.</text>
</comment>
<proteinExistence type="evidence at protein level"/>
<accession>C0HJT8</accession>
<feature type="chain" id="PRO_0000433393" description="Hemoglobin subunit alpha" evidence="3">
    <location>
        <begin position="1" status="less than"/>
        <end position="135"/>
    </location>
</feature>
<feature type="domain" description="Globin" evidence="2">
    <location>
        <begin position="1"/>
        <end position="135"/>
    </location>
</feature>
<feature type="binding site" evidence="2">
    <location>
        <position position="52"/>
    </location>
    <ligand>
        <name>O2</name>
        <dbReference type="ChEBI" id="CHEBI:15379"/>
    </ligand>
</feature>
<feature type="binding site" description="proximal binding residue" evidence="2">
    <location>
        <position position="81"/>
    </location>
    <ligand>
        <name>heme b</name>
        <dbReference type="ChEBI" id="CHEBI:60344"/>
    </ligand>
    <ligandPart>
        <name>Fe</name>
        <dbReference type="ChEBI" id="CHEBI:18248"/>
    </ligandPart>
</feature>
<feature type="non-terminal residue" evidence="4">
    <location>
        <position position="1"/>
    </location>
</feature>